<organism>
    <name type="scientific">Clostridium botulinum (strain Eklund 17B / Type B)</name>
    <dbReference type="NCBI Taxonomy" id="935198"/>
    <lineage>
        <taxon>Bacteria</taxon>
        <taxon>Bacillati</taxon>
        <taxon>Bacillota</taxon>
        <taxon>Clostridia</taxon>
        <taxon>Eubacteriales</taxon>
        <taxon>Clostridiaceae</taxon>
        <taxon>Clostridium</taxon>
    </lineage>
</organism>
<gene>
    <name evidence="1" type="primary">rpmI</name>
    <name type="ordered locus">CLL_A2478</name>
</gene>
<protein>
    <recommendedName>
        <fullName evidence="1">Large ribosomal subunit protein bL35</fullName>
    </recommendedName>
    <alternativeName>
        <fullName evidence="3">50S ribosomal protein L35</fullName>
    </alternativeName>
</protein>
<name>RL35_CLOBB</name>
<feature type="chain" id="PRO_1000127327" description="Large ribosomal subunit protein bL35">
    <location>
        <begin position="1"/>
        <end position="65"/>
    </location>
</feature>
<feature type="region of interest" description="Disordered" evidence="2">
    <location>
        <begin position="1"/>
        <end position="25"/>
    </location>
</feature>
<proteinExistence type="inferred from homology"/>
<evidence type="ECO:0000255" key="1">
    <source>
        <dbReference type="HAMAP-Rule" id="MF_00514"/>
    </source>
</evidence>
<evidence type="ECO:0000256" key="2">
    <source>
        <dbReference type="SAM" id="MobiDB-lite"/>
    </source>
</evidence>
<evidence type="ECO:0000305" key="3"/>
<accession>B2TS60</accession>
<sequence>MPKMKSHRGAAKRFKKTGTGKLKRAKAFKSHILTKKSPKTKRNLRKGGYVSKSQEKVMKKLLPYL</sequence>
<keyword id="KW-0687">Ribonucleoprotein</keyword>
<keyword id="KW-0689">Ribosomal protein</keyword>
<comment type="similarity">
    <text evidence="1">Belongs to the bacterial ribosomal protein bL35 family.</text>
</comment>
<dbReference type="EMBL" id="CP001056">
    <property type="protein sequence ID" value="ACD21859.1"/>
    <property type="molecule type" value="Genomic_DNA"/>
</dbReference>
<dbReference type="SMR" id="B2TS60"/>
<dbReference type="KEGG" id="cbk:CLL_A2478"/>
<dbReference type="PATRIC" id="fig|935198.13.peg.2438"/>
<dbReference type="HOGENOM" id="CLU_169643_1_1_9"/>
<dbReference type="Proteomes" id="UP000001195">
    <property type="component" value="Chromosome"/>
</dbReference>
<dbReference type="GO" id="GO:0022625">
    <property type="term" value="C:cytosolic large ribosomal subunit"/>
    <property type="evidence" value="ECO:0007669"/>
    <property type="project" value="TreeGrafter"/>
</dbReference>
<dbReference type="GO" id="GO:0003735">
    <property type="term" value="F:structural constituent of ribosome"/>
    <property type="evidence" value="ECO:0007669"/>
    <property type="project" value="InterPro"/>
</dbReference>
<dbReference type="GO" id="GO:0006412">
    <property type="term" value="P:translation"/>
    <property type="evidence" value="ECO:0007669"/>
    <property type="project" value="UniProtKB-UniRule"/>
</dbReference>
<dbReference type="FunFam" id="4.10.410.60:FF:000001">
    <property type="entry name" value="50S ribosomal protein L35"/>
    <property type="match status" value="1"/>
</dbReference>
<dbReference type="Gene3D" id="4.10.410.60">
    <property type="match status" value="1"/>
</dbReference>
<dbReference type="HAMAP" id="MF_00514">
    <property type="entry name" value="Ribosomal_bL35"/>
    <property type="match status" value="1"/>
</dbReference>
<dbReference type="InterPro" id="IPR001706">
    <property type="entry name" value="Ribosomal_bL35"/>
</dbReference>
<dbReference type="InterPro" id="IPR021137">
    <property type="entry name" value="Ribosomal_bL35-like"/>
</dbReference>
<dbReference type="InterPro" id="IPR018265">
    <property type="entry name" value="Ribosomal_bL35_CS"/>
</dbReference>
<dbReference type="InterPro" id="IPR037229">
    <property type="entry name" value="Ribosomal_bL35_sf"/>
</dbReference>
<dbReference type="NCBIfam" id="TIGR00001">
    <property type="entry name" value="rpmI_bact"/>
    <property type="match status" value="1"/>
</dbReference>
<dbReference type="PANTHER" id="PTHR33343">
    <property type="entry name" value="54S RIBOSOMAL PROTEIN BL35M"/>
    <property type="match status" value="1"/>
</dbReference>
<dbReference type="PANTHER" id="PTHR33343:SF1">
    <property type="entry name" value="LARGE RIBOSOMAL SUBUNIT PROTEIN BL35M"/>
    <property type="match status" value="1"/>
</dbReference>
<dbReference type="Pfam" id="PF01632">
    <property type="entry name" value="Ribosomal_L35p"/>
    <property type="match status" value="1"/>
</dbReference>
<dbReference type="PRINTS" id="PR00064">
    <property type="entry name" value="RIBOSOMALL35"/>
</dbReference>
<dbReference type="SUPFAM" id="SSF143034">
    <property type="entry name" value="L35p-like"/>
    <property type="match status" value="1"/>
</dbReference>
<dbReference type="PROSITE" id="PS00936">
    <property type="entry name" value="RIBOSOMAL_L35"/>
    <property type="match status" value="1"/>
</dbReference>
<reference key="1">
    <citation type="submission" date="2008-04" db="EMBL/GenBank/DDBJ databases">
        <title>Complete sequence of Clostridium botulinum strain Eklund.</title>
        <authorList>
            <person name="Brinkac L.M."/>
            <person name="Brown J.L."/>
            <person name="Bruce D."/>
            <person name="Detter C."/>
            <person name="Munk C."/>
            <person name="Smith L.A."/>
            <person name="Smith T.J."/>
            <person name="Sutton G."/>
            <person name="Brettin T.S."/>
        </authorList>
    </citation>
    <scope>NUCLEOTIDE SEQUENCE [LARGE SCALE GENOMIC DNA]</scope>
    <source>
        <strain>Eklund 17B / Type B</strain>
    </source>
</reference>